<organism>
    <name type="scientific">Escherichia coli O6:H1 (strain CFT073 / ATCC 700928 / UPEC)</name>
    <dbReference type="NCBI Taxonomy" id="199310"/>
    <lineage>
        <taxon>Bacteria</taxon>
        <taxon>Pseudomonadati</taxon>
        <taxon>Pseudomonadota</taxon>
        <taxon>Gammaproteobacteria</taxon>
        <taxon>Enterobacterales</taxon>
        <taxon>Enterobacteriaceae</taxon>
        <taxon>Escherichia</taxon>
    </lineage>
</organism>
<evidence type="ECO:0000250" key="1">
    <source>
        <dbReference type="UniProtKB" id="P0AA16"/>
    </source>
</evidence>
<evidence type="ECO:0000255" key="2">
    <source>
        <dbReference type="PROSITE-ProRule" id="PRU00169"/>
    </source>
</evidence>
<evidence type="ECO:0000255" key="3">
    <source>
        <dbReference type="PROSITE-ProRule" id="PRU01091"/>
    </source>
</evidence>
<evidence type="ECO:0000305" key="4"/>
<keyword id="KW-0010">Activator</keyword>
<keyword id="KW-0963">Cytoplasm</keyword>
<keyword id="KW-0238">DNA-binding</keyword>
<keyword id="KW-0597">Phosphoprotein</keyword>
<keyword id="KW-1185">Reference proteome</keyword>
<keyword id="KW-0678">Repressor</keyword>
<keyword id="KW-0346">Stress response</keyword>
<keyword id="KW-0804">Transcription</keyword>
<keyword id="KW-0805">Transcription regulation</keyword>
<keyword id="KW-0902">Two-component regulatory system</keyword>
<name>OMPR_ECOL6</name>
<accession>P0AA17</accession>
<accession>O31133</accession>
<accession>P03025</accession>
<accession>P08981</accession>
<accession>P41405</accession>
<feature type="chain" id="PRO_0000081177" description="DNA-binding dual transcriptional regulator OmpR">
    <location>
        <begin position="1"/>
        <end position="239"/>
    </location>
</feature>
<feature type="domain" description="Response regulatory" evidence="2">
    <location>
        <begin position="6"/>
        <end position="120"/>
    </location>
</feature>
<feature type="DNA-binding region" description="OmpR/PhoB-type" evidence="3">
    <location>
        <begin position="135"/>
        <end position="234"/>
    </location>
</feature>
<feature type="modified residue" description="4-aspartylphosphate" evidence="1 2">
    <location>
        <position position="55"/>
    </location>
</feature>
<sequence>MQENYKILVVDDDMRLRALLERYLTEQGFQVRSVANAEQMDRLLTRESFHLMVLDLMLPGEDGLSICRRLRSQSNPMPIIMVTAKGEEVDRIVGLEIGADDYIPKPFNPRELLARIRAVLRRQANELPGAPSQEEAVIAFGKFKLNLGTREMFREDEPMPLTSGEFAVLKALVSHPREPLSRDKLMNLARGREYSAMERSIDVQISRLRRMVEEDPAHPRYIQTVWGLGYVFVPDGSKA</sequence>
<comment type="function">
    <text evidence="1">Member of the two-component regulatory system EnvZ/OmpR involved in osmoregulation (particularly of genes ompF and ompC) as well as other genes. Plays a central role in both acid and osmotic stress responses. Binds to the promoter of both ompC and ompF; at low osmolarity it activates ompF transcription, while at high osmolarity it represses ompF and activates ompC transcription.</text>
</comment>
<comment type="subunit">
    <text evidence="1">Monomer and multimer.</text>
</comment>
<comment type="subcellular location">
    <subcellularLocation>
        <location evidence="1">Cytoplasm</location>
    </subcellularLocation>
</comment>
<comment type="PTM">
    <text evidence="1">Phosphorylated by EnvZ; this stimulates its DNA-binding ability. Asp-55 is the primary phosphate acceptor site.</text>
</comment>
<protein>
    <recommendedName>
        <fullName evidence="4">DNA-binding dual transcriptional regulator OmpR</fullName>
    </recommendedName>
    <alternativeName>
        <fullName evidence="4">Transcriptional regulatory protein OmpR</fullName>
    </alternativeName>
</protein>
<proteinExistence type="inferred from homology"/>
<reference key="1">
    <citation type="journal article" date="2002" name="Proc. Natl. Acad. Sci. U.S.A.">
        <title>Extensive mosaic structure revealed by the complete genome sequence of uropathogenic Escherichia coli.</title>
        <authorList>
            <person name="Welch R.A."/>
            <person name="Burland V."/>
            <person name="Plunkett G. III"/>
            <person name="Redford P."/>
            <person name="Roesch P."/>
            <person name="Rasko D."/>
            <person name="Buckles E.L."/>
            <person name="Liou S.-R."/>
            <person name="Boutin A."/>
            <person name="Hackett J."/>
            <person name="Stroud D."/>
            <person name="Mayhew G.F."/>
            <person name="Rose D.J."/>
            <person name="Zhou S."/>
            <person name="Schwartz D.C."/>
            <person name="Perna N.T."/>
            <person name="Mobley H.L.T."/>
            <person name="Donnenberg M.S."/>
            <person name="Blattner F.R."/>
        </authorList>
    </citation>
    <scope>NUCLEOTIDE SEQUENCE [LARGE SCALE GENOMIC DNA]</scope>
    <source>
        <strain>CFT073 / ATCC 700928 / UPEC</strain>
    </source>
</reference>
<dbReference type="EMBL" id="AE014075">
    <property type="protein sequence ID" value="AAN82619.1"/>
    <property type="molecule type" value="Genomic_DNA"/>
</dbReference>
<dbReference type="RefSeq" id="WP_001157751.1">
    <property type="nucleotide sequence ID" value="NZ_CP051263.1"/>
</dbReference>
<dbReference type="SMR" id="P0AA17"/>
<dbReference type="STRING" id="199310.c4181"/>
<dbReference type="GeneID" id="98390506"/>
<dbReference type="KEGG" id="ecc:c4181"/>
<dbReference type="eggNOG" id="COG0745">
    <property type="taxonomic scope" value="Bacteria"/>
</dbReference>
<dbReference type="HOGENOM" id="CLU_000445_30_4_6"/>
<dbReference type="BioCyc" id="ECOL199310:C4181-MONOMER"/>
<dbReference type="Proteomes" id="UP000001410">
    <property type="component" value="Chromosome"/>
</dbReference>
<dbReference type="GO" id="GO:0005829">
    <property type="term" value="C:cytosol"/>
    <property type="evidence" value="ECO:0007669"/>
    <property type="project" value="TreeGrafter"/>
</dbReference>
<dbReference type="GO" id="GO:0032993">
    <property type="term" value="C:protein-DNA complex"/>
    <property type="evidence" value="ECO:0007669"/>
    <property type="project" value="TreeGrafter"/>
</dbReference>
<dbReference type="GO" id="GO:0000156">
    <property type="term" value="F:phosphorelay response regulator activity"/>
    <property type="evidence" value="ECO:0007669"/>
    <property type="project" value="TreeGrafter"/>
</dbReference>
<dbReference type="GO" id="GO:0000976">
    <property type="term" value="F:transcription cis-regulatory region binding"/>
    <property type="evidence" value="ECO:0007669"/>
    <property type="project" value="TreeGrafter"/>
</dbReference>
<dbReference type="GO" id="GO:0006355">
    <property type="term" value="P:regulation of DNA-templated transcription"/>
    <property type="evidence" value="ECO:0007669"/>
    <property type="project" value="InterPro"/>
</dbReference>
<dbReference type="CDD" id="cd00383">
    <property type="entry name" value="trans_reg_C"/>
    <property type="match status" value="1"/>
</dbReference>
<dbReference type="FunFam" id="1.10.10.10:FF:000023">
    <property type="entry name" value="Two-component response regulator OmpR"/>
    <property type="match status" value="1"/>
</dbReference>
<dbReference type="FunFam" id="3.40.50.2300:FF:000008">
    <property type="entry name" value="Two-component response regulator OmpR"/>
    <property type="match status" value="1"/>
</dbReference>
<dbReference type="Gene3D" id="3.40.50.2300">
    <property type="match status" value="1"/>
</dbReference>
<dbReference type="Gene3D" id="6.10.250.690">
    <property type="match status" value="1"/>
</dbReference>
<dbReference type="Gene3D" id="1.10.10.10">
    <property type="entry name" value="Winged helix-like DNA-binding domain superfamily/Winged helix DNA-binding domain"/>
    <property type="match status" value="1"/>
</dbReference>
<dbReference type="InterPro" id="IPR011006">
    <property type="entry name" value="CheY-like_superfamily"/>
</dbReference>
<dbReference type="InterPro" id="IPR001867">
    <property type="entry name" value="OmpR/PhoB-type_DNA-bd"/>
</dbReference>
<dbReference type="InterPro" id="IPR016032">
    <property type="entry name" value="Sig_transdc_resp-reg_C-effctor"/>
</dbReference>
<dbReference type="InterPro" id="IPR001789">
    <property type="entry name" value="Sig_transdc_resp-reg_receiver"/>
</dbReference>
<dbReference type="InterPro" id="IPR039420">
    <property type="entry name" value="WalR-like"/>
</dbReference>
<dbReference type="InterPro" id="IPR036388">
    <property type="entry name" value="WH-like_DNA-bd_sf"/>
</dbReference>
<dbReference type="NCBIfam" id="NF007005">
    <property type="entry name" value="PRK09468.1"/>
    <property type="match status" value="1"/>
</dbReference>
<dbReference type="PANTHER" id="PTHR48111:SF4">
    <property type="entry name" value="DNA-BINDING DUAL TRANSCRIPTIONAL REGULATOR OMPR"/>
    <property type="match status" value="1"/>
</dbReference>
<dbReference type="PANTHER" id="PTHR48111">
    <property type="entry name" value="REGULATOR OF RPOS"/>
    <property type="match status" value="1"/>
</dbReference>
<dbReference type="Pfam" id="PF00072">
    <property type="entry name" value="Response_reg"/>
    <property type="match status" value="1"/>
</dbReference>
<dbReference type="Pfam" id="PF00486">
    <property type="entry name" value="Trans_reg_C"/>
    <property type="match status" value="1"/>
</dbReference>
<dbReference type="SMART" id="SM00448">
    <property type="entry name" value="REC"/>
    <property type="match status" value="1"/>
</dbReference>
<dbReference type="SMART" id="SM00862">
    <property type="entry name" value="Trans_reg_C"/>
    <property type="match status" value="1"/>
</dbReference>
<dbReference type="SUPFAM" id="SSF46894">
    <property type="entry name" value="C-terminal effector domain of the bipartite response regulators"/>
    <property type="match status" value="1"/>
</dbReference>
<dbReference type="SUPFAM" id="SSF52172">
    <property type="entry name" value="CheY-like"/>
    <property type="match status" value="1"/>
</dbReference>
<dbReference type="PROSITE" id="PS51755">
    <property type="entry name" value="OMPR_PHOB"/>
    <property type="match status" value="1"/>
</dbReference>
<dbReference type="PROSITE" id="PS50110">
    <property type="entry name" value="RESPONSE_REGULATORY"/>
    <property type="match status" value="1"/>
</dbReference>
<gene>
    <name type="primary">ompR</name>
    <name type="ordered locus">c4181</name>
</gene>